<dbReference type="EMBL" id="M35238">
    <property type="protein sequence ID" value="AAA42789.1"/>
    <property type="molecule type" value="Genomic_RNA"/>
</dbReference>
<dbReference type="SMR" id="P25507"/>
<dbReference type="GlyCosmos" id="P25507">
    <property type="glycosylation" value="9 sites, No reported glycans"/>
</dbReference>
<dbReference type="GO" id="GO:0020002">
    <property type="term" value="C:host cell plasma membrane"/>
    <property type="evidence" value="ECO:0007669"/>
    <property type="project" value="UniProtKB-SubCell"/>
</dbReference>
<dbReference type="GO" id="GO:0016020">
    <property type="term" value="C:membrane"/>
    <property type="evidence" value="ECO:0007669"/>
    <property type="project" value="UniProtKB-KW"/>
</dbReference>
<dbReference type="GO" id="GO:0019031">
    <property type="term" value="C:viral envelope"/>
    <property type="evidence" value="ECO:0007669"/>
    <property type="project" value="UniProtKB-KW"/>
</dbReference>
<dbReference type="GO" id="GO:0055036">
    <property type="term" value="C:virion membrane"/>
    <property type="evidence" value="ECO:0007669"/>
    <property type="project" value="UniProtKB-SubCell"/>
</dbReference>
<dbReference type="GO" id="GO:0019064">
    <property type="term" value="P:fusion of virus membrane with host plasma membrane"/>
    <property type="evidence" value="ECO:0007669"/>
    <property type="project" value="UniProtKB-KW"/>
</dbReference>
<dbReference type="GO" id="GO:0046718">
    <property type="term" value="P:symbiont entry into host cell"/>
    <property type="evidence" value="ECO:0007669"/>
    <property type="project" value="UniProtKB-KW"/>
</dbReference>
<dbReference type="GO" id="GO:0019062">
    <property type="term" value="P:virion attachment to host cell"/>
    <property type="evidence" value="ECO:0007669"/>
    <property type="project" value="UniProtKB-KW"/>
</dbReference>
<dbReference type="Gene3D" id="1.10.287.210">
    <property type="match status" value="1"/>
</dbReference>
<dbReference type="InterPro" id="IPR018154">
    <property type="entry name" value="TLV/ENV_coat_polyprotein"/>
</dbReference>
<dbReference type="PANTHER" id="PTHR10424:SF73">
    <property type="entry name" value="ENDOGENOUS RETROVIRUS GROUP FC1 ENV POLYPROTEIN-RELATED"/>
    <property type="match status" value="1"/>
</dbReference>
<dbReference type="PANTHER" id="PTHR10424">
    <property type="entry name" value="VIRAL ENVELOPE PROTEIN"/>
    <property type="match status" value="1"/>
</dbReference>
<dbReference type="Pfam" id="PF00429">
    <property type="entry name" value="TLV_coat"/>
    <property type="match status" value="1"/>
</dbReference>
<dbReference type="SUPFAM" id="SSF58069">
    <property type="entry name" value="Virus ectodomain"/>
    <property type="match status" value="1"/>
</dbReference>
<reference key="1">
    <citation type="journal article" date="1990" name="J. Virol.">
        <title>Sequence variability of bovine leukemia virus env gene and its relevance to the structure and antigenicity of the glycoproteins.</title>
        <authorList>
            <person name="Mamoun R.Z."/>
            <person name="Morisson M."/>
            <person name="Rebeyrotte N."/>
            <person name="Busetta B."/>
            <person name="Couez D."/>
            <person name="Kettmann R."/>
            <person name="Hospital M."/>
            <person name="Guillemain B."/>
        </authorList>
    </citation>
    <scope>NUCLEOTIDE SEQUENCE [GENOMIC RNA]</scope>
</reference>
<organism>
    <name type="scientific">Bovine leukemia virus (isolate Belgium LB59)</name>
    <name type="common">BLV</name>
    <dbReference type="NCBI Taxonomy" id="11906"/>
    <lineage>
        <taxon>Viruses</taxon>
        <taxon>Riboviria</taxon>
        <taxon>Pararnavirae</taxon>
        <taxon>Artverviricota</taxon>
        <taxon>Revtraviricetes</taxon>
        <taxon>Ortervirales</taxon>
        <taxon>Retroviridae</taxon>
        <taxon>Orthoretrovirinae</taxon>
        <taxon>Deltaretrovirus</taxon>
        <taxon>Bovine leukemia virus</taxon>
    </lineage>
</organism>
<feature type="signal peptide" evidence="2">
    <location>
        <begin position="1"/>
        <end position="33"/>
    </location>
</feature>
<feature type="chain" id="PRO_0000239555" description="Envelope glycoprotein">
    <location>
        <begin position="34"/>
        <end position="515"/>
    </location>
</feature>
<feature type="chain" id="PRO_0000040697" description="Surface protein" evidence="1">
    <location>
        <begin position="34"/>
        <end position="301"/>
    </location>
</feature>
<feature type="chain" id="PRO_0000040698" description="Transmembrane protein" evidence="1">
    <location>
        <begin position="302"/>
        <end position="515"/>
    </location>
</feature>
<feature type="topological domain" description="Extracellular" evidence="2">
    <location>
        <begin position="34"/>
        <end position="435"/>
    </location>
</feature>
<feature type="transmembrane region" description="Helical" evidence="2">
    <location>
        <begin position="436"/>
        <end position="456"/>
    </location>
</feature>
<feature type="topological domain" description="Cytoplasmic" evidence="2">
    <location>
        <begin position="457"/>
        <end position="515"/>
    </location>
</feature>
<feature type="region of interest" description="Fusion peptide" evidence="2">
    <location>
        <begin position="304"/>
        <end position="324"/>
    </location>
</feature>
<feature type="region of interest" description="Immunosuppression" evidence="1">
    <location>
        <begin position="365"/>
        <end position="381"/>
    </location>
</feature>
<feature type="coiled-coil region" evidence="2">
    <location>
        <begin position="330"/>
        <end position="376"/>
    </location>
</feature>
<feature type="coiled-coil region" evidence="2">
    <location>
        <begin position="388"/>
        <end position="420"/>
    </location>
</feature>
<feature type="short sequence motif" description="CXXC">
    <location>
        <begin position="212"/>
        <end position="215"/>
    </location>
</feature>
<feature type="short sequence motif" description="CX6CC">
    <location>
        <begin position="384"/>
        <end position="392"/>
    </location>
</feature>
<feature type="site" description="Cleavage; by host" evidence="1">
    <location>
        <begin position="301"/>
        <end position="302"/>
    </location>
</feature>
<feature type="lipid moiety-binding region" description="S-palmitoyl cysteine; by host" evidence="1">
    <location>
        <position position="455"/>
    </location>
</feature>
<feature type="glycosylation site" description="N-linked (GlcNAc...) asparagine; by host" evidence="2">
    <location>
        <position position="129"/>
    </location>
</feature>
<feature type="glycosylation site" description="N-linked (GlcNAc...) asparagine; by host" evidence="2">
    <location>
        <position position="203"/>
    </location>
</feature>
<feature type="glycosylation site" description="N-linked (GlcNAc...) asparagine; by host" evidence="2">
    <location>
        <position position="230"/>
    </location>
</feature>
<feature type="glycosylation site" description="N-linked (GlcNAc...) asparagine; by host" evidence="2">
    <location>
        <position position="251"/>
    </location>
</feature>
<feature type="glycosylation site" description="N-linked (GlcNAc...) asparagine; by host" evidence="2">
    <location>
        <position position="256"/>
    </location>
</feature>
<feature type="glycosylation site" description="N-linked (GlcNAc...) asparagine; by host" evidence="2">
    <location>
        <position position="271"/>
    </location>
</feature>
<feature type="glycosylation site" description="N-linked (GlcNAc...) asparagine; by host" evidence="2">
    <location>
        <position position="287"/>
    </location>
</feature>
<feature type="glycosylation site" description="N-linked (GlcNAc...) asparagine; by host" evidence="2">
    <location>
        <position position="351"/>
    </location>
</feature>
<feature type="glycosylation site" description="N-linked (GlcNAc...) asparagine; by host" evidence="2">
    <location>
        <position position="398"/>
    </location>
</feature>
<feature type="disulfide bond" description="Interchain (between SU and TM chains, or C-215 with C-392); in linked form" evidence="1">
    <location>
        <begin position="212"/>
        <end position="392"/>
    </location>
</feature>
<feature type="disulfide bond" evidence="1">
    <location>
        <begin position="212"/>
        <end position="215"/>
    </location>
</feature>
<feature type="disulfide bond" evidence="1">
    <location>
        <begin position="384"/>
        <end position="391"/>
    </location>
</feature>
<sequence>MPKERRSRRRPQPIIRWVSLTLTLLALCQPIQTWRCSLSLGNQQWMTTYNQEAKFFISIDQILEAHNQSPFCPRSPRYTLDFVNGYPKIYWPPPQGRRRFGARAMVTYDCEPRCPYVGADHFDCPHWDNASQADQGSFYVNHQTLFLHLKQCHGIFTLTWEIWGYDPLITFSLHKIPDPPQPDFPQLNSDWVPSVRSWALLLNQTARAFPDCAICWEPSPPWAPEILVYNKTISSSGPGLALPDAQIFWVNTSLFNTTQGWHHPSQRLLFNVSQGNALLLPPISLVNLSTASSAPPTRVRRSPVAALTLGLALSVGLTGINVAVSALSHQRLTSLIHVLEQDQQRLITAINQTHYNLLNVASVVAQNRRGLDWLYIRLGFQSLCPTINEPCCFLRIQNDSIIRLGDLQPLSQRVSTDWQWPWNWDLGLTAWVRETIHSVLSLFLLALFLLFLAPCLIKCLTSRLLKLLRQAPHFPEISFPPKPDSDYQALLPSAPEIYSHLSPTKPDYINLRPCP</sequence>
<protein>
    <recommendedName>
        <fullName>Envelope glycoprotein</fullName>
    </recommendedName>
    <alternativeName>
        <fullName>Env polyprotein</fullName>
    </alternativeName>
    <component>
        <recommendedName>
            <fullName>Surface protein</fullName>
            <shortName>SU</shortName>
        </recommendedName>
        <alternativeName>
            <fullName>Glycoprotein 51</fullName>
            <shortName>gp51</shortName>
        </alternativeName>
    </component>
    <component>
        <recommendedName>
            <fullName>Transmembrane protein</fullName>
            <shortName>TM</shortName>
        </recommendedName>
        <alternativeName>
            <fullName>Glycoprotein 30</fullName>
            <shortName>gp30</shortName>
        </alternativeName>
    </component>
</protein>
<evidence type="ECO:0000250" key="1"/>
<evidence type="ECO:0000255" key="2"/>
<gene>
    <name type="primary">env</name>
</gene>
<comment type="function">
    <text evidence="1">The surface protein (SU) attaches the virus to the host cell by binding to its receptor. This interaction triggers the refolding of the transmembrane protein (TM) and is thought to activate its fusogenic potential by unmasking its fusion peptide. Fusion occurs at the host cell plasma membrane (By similarity).</text>
</comment>
<comment type="function">
    <text evidence="1">The transmembrane protein (TM) acts as a class I viral fusion protein. Under the current model, the protein has at least 3 conformational states: pre-fusion native state, pre-hairpin intermediate state, and post-fusion hairpin state. During viral and target cell membrane fusion, the coiled coil regions (heptad repeats) assume a trimer-of-hairpins structure, positioning the fusion peptide in close proximity to the C-terminal region of the ectodomain. The formation of this structure appears to drive apposition and subsequent fusion of viral and target cell membranes. Membranes fusion leads to delivery of the nucleocapsid into the cytoplasm (By similarity).</text>
</comment>
<comment type="subunit">
    <text evidence="1">The mature envelope protein (Env) consists of a trimer of SU-TM heterodimers attached by a labile interchain disulfide bond.</text>
</comment>
<comment type="subcellular location">
    <molecule>Transmembrane protein</molecule>
    <subcellularLocation>
        <location evidence="1">Virion membrane</location>
        <topology evidence="1">Single-pass type I membrane protein</topology>
    </subcellularLocation>
    <subcellularLocation>
        <location evidence="1">Host cell membrane</location>
        <topology evidence="1">Single-pass type I membrane protein</topology>
    </subcellularLocation>
    <text evidence="1">It is probably concentrated at the site of budding and incorporated into the virions possibly by contacts between the cytoplasmic tail of Env and the N-terminus of Gag.</text>
</comment>
<comment type="subcellular location">
    <molecule>Surface protein</molecule>
    <subcellularLocation>
        <location evidence="1">Virion membrane</location>
        <topology evidence="1">Peripheral membrane protein</topology>
    </subcellularLocation>
    <subcellularLocation>
        <location evidence="1">Host cell membrane</location>
        <topology evidence="1">Peripheral membrane protein</topology>
    </subcellularLocation>
    <text evidence="1">The surface protein is not anchored to the viral envelope, but associates with the extravirion surface through its binding to TM. It is probably concentrated at the site of budding and incorporated into the virions possibly by contacts between the cytoplasmic tail of Env and the N-terminus of Gag (By similarity).</text>
</comment>
<comment type="domain">
    <text evidence="1">The 17 amino acids long immunosuppressive region is present in many retroviral envelope proteins. Synthetic peptides derived from this relatively conserved sequence inhibit immune function in vitro and in vivo (By similarity).</text>
</comment>
<comment type="PTM">
    <text evidence="1">Specific enzymatic cleavages in vivo yield mature proteins. Envelope glycoproteins are synthesized as an inactive precursor that is N-glycosylated and processed likely by host cell furin or by a furin-like protease in the Golgi to yield the mature SU and TM proteins. The cleavage site between SU and TM requires the minimal sequence [KR]-X-[KR]-R (By similarity).</text>
</comment>
<comment type="PTM">
    <text evidence="1">The CXXC motif is highly conserved across a broad range of retroviral envelope proteins. It is thought to participate in the formation of a labile disulfide bond possibly with the CX6CC motif present in the transmembrane protein. Isomerization of the intersubunit disulfide bond to an SU intrachain disulfide bond is thought to occur upon receptor recognition in order to allow membrane fusion (By similarity).</text>
</comment>
<comment type="PTM">
    <text evidence="1">The transmembrane protein is palmitoylated.</text>
</comment>
<name>ENV_BLVB5</name>
<accession>P25507</accession>
<organismHost>
    <name type="scientific">Bos taurus</name>
    <name type="common">Bovine</name>
    <dbReference type="NCBI Taxonomy" id="9913"/>
</organismHost>
<keyword id="KW-0165">Cleavage on pair of basic residues</keyword>
<keyword id="KW-0175">Coiled coil</keyword>
<keyword id="KW-1015">Disulfide bond</keyword>
<keyword id="KW-1169">Fusion of virus membrane with host cell membrane</keyword>
<keyword id="KW-1168">Fusion of virus membrane with host membrane</keyword>
<keyword id="KW-0325">Glycoprotein</keyword>
<keyword id="KW-1032">Host cell membrane</keyword>
<keyword id="KW-1043">Host membrane</keyword>
<keyword id="KW-0945">Host-virus interaction</keyword>
<keyword id="KW-0449">Lipoprotein</keyword>
<keyword id="KW-0472">Membrane</keyword>
<keyword id="KW-0564">Palmitate</keyword>
<keyword id="KW-0732">Signal</keyword>
<keyword id="KW-0812">Transmembrane</keyword>
<keyword id="KW-1133">Transmembrane helix</keyword>
<keyword id="KW-1161">Viral attachment to host cell</keyword>
<keyword id="KW-0261">Viral envelope protein</keyword>
<keyword id="KW-1162">Viral penetration into host cytoplasm</keyword>
<keyword id="KW-0946">Virion</keyword>
<keyword id="KW-1160">Virus entry into host cell</keyword>
<proteinExistence type="inferred from homology"/>